<dbReference type="EMBL" id="Z46241">
    <property type="protein sequence ID" value="CAA86318.1"/>
    <property type="molecule type" value="Genomic_DNA"/>
</dbReference>
<dbReference type="PIR" id="T19825">
    <property type="entry name" value="T19825"/>
</dbReference>
<dbReference type="RefSeq" id="NP_001309440.1">
    <property type="nucleotide sequence ID" value="NM_001322567.1"/>
</dbReference>
<dbReference type="SMR" id="P46941"/>
<dbReference type="BioGRID" id="40870">
    <property type="interactions" value="12"/>
</dbReference>
<dbReference type="DIP" id="DIP-24380N"/>
<dbReference type="FunCoup" id="P46941">
    <property type="interactions" value="1403"/>
</dbReference>
<dbReference type="STRING" id="6239.C38D4.5a.1"/>
<dbReference type="iPTMnet" id="P46941"/>
<dbReference type="PaxDb" id="6239-C38D4.5"/>
<dbReference type="PeptideAtlas" id="P46941"/>
<dbReference type="EnsemblMetazoa" id="C38D4.5a.1">
    <property type="protein sequence ID" value="C38D4.5a.1"/>
    <property type="gene ID" value="WBGene00008006"/>
</dbReference>
<dbReference type="GeneID" id="175636"/>
<dbReference type="KEGG" id="cel:CELE_C38D4.5"/>
<dbReference type="UCSC" id="C38D4.5.1">
    <property type="organism name" value="c. elegans"/>
</dbReference>
<dbReference type="AGR" id="WB:WBGene00008006"/>
<dbReference type="CTD" id="175636"/>
<dbReference type="WormBase" id="C38D4.5a">
    <property type="protein sequence ID" value="CE51454"/>
    <property type="gene ID" value="WBGene00008006"/>
    <property type="gene designation" value="tag-325"/>
</dbReference>
<dbReference type="eggNOG" id="KOG1450">
    <property type="taxonomic scope" value="Eukaryota"/>
</dbReference>
<dbReference type="GeneTree" id="ENSGT00950000182860"/>
<dbReference type="HOGENOM" id="CLU_339560_0_0_1"/>
<dbReference type="InParanoid" id="P46941"/>
<dbReference type="OMA" id="NGWFHAM"/>
<dbReference type="OrthoDB" id="79452at2759"/>
<dbReference type="PhylomeDB" id="P46941"/>
<dbReference type="Reactome" id="R-CEL-6798695">
    <property type="pathway name" value="Neutrophil degranulation"/>
</dbReference>
<dbReference type="Reactome" id="R-CEL-8980692">
    <property type="pathway name" value="RHOA GTPase cycle"/>
</dbReference>
<dbReference type="Reactome" id="R-CEL-9013148">
    <property type="pathway name" value="CDC42 GTPase cycle"/>
</dbReference>
<dbReference type="Reactome" id="R-CEL-9013149">
    <property type="pathway name" value="RAC1 GTPase cycle"/>
</dbReference>
<dbReference type="Reactome" id="R-CEL-9013405">
    <property type="pathway name" value="RHOD GTPase cycle"/>
</dbReference>
<dbReference type="Reactome" id="R-CEL-9013423">
    <property type="pathway name" value="RAC3 GTPase cycle"/>
</dbReference>
<dbReference type="Reactome" id="R-CEL-9013424">
    <property type="pathway name" value="RHOV GTPase cycle"/>
</dbReference>
<dbReference type="Reactome" id="R-CEL-9035034">
    <property type="pathway name" value="RHOF GTPase cycle"/>
</dbReference>
<dbReference type="SignaLink" id="P46941"/>
<dbReference type="PRO" id="PR:P46941"/>
<dbReference type="Proteomes" id="UP000001940">
    <property type="component" value="Chromosome III"/>
</dbReference>
<dbReference type="Bgee" id="WBGene00008006">
    <property type="expression patterns" value="Expressed in pharyngeal muscle cell (C elegans) and 4 other cell types or tissues"/>
</dbReference>
<dbReference type="ExpressionAtlas" id="P46941">
    <property type="expression patterns" value="baseline and differential"/>
</dbReference>
<dbReference type="GO" id="GO:0005737">
    <property type="term" value="C:cytoplasm"/>
    <property type="evidence" value="ECO:0000318"/>
    <property type="project" value="GO_Central"/>
</dbReference>
<dbReference type="GO" id="GO:0005886">
    <property type="term" value="C:plasma membrane"/>
    <property type="evidence" value="ECO:0000318"/>
    <property type="project" value="GO_Central"/>
</dbReference>
<dbReference type="GO" id="GO:0005096">
    <property type="term" value="F:GTPase activator activity"/>
    <property type="evidence" value="ECO:0000318"/>
    <property type="project" value="GO_Central"/>
</dbReference>
<dbReference type="GO" id="GO:0007264">
    <property type="term" value="P:small GTPase-mediated signal transduction"/>
    <property type="evidence" value="ECO:0000318"/>
    <property type="project" value="GO_Central"/>
</dbReference>
<dbReference type="CDD" id="cd13233">
    <property type="entry name" value="PH_ARHGAP9-like"/>
    <property type="match status" value="1"/>
</dbReference>
<dbReference type="CDD" id="cd04403">
    <property type="entry name" value="RhoGAP_ARHGAP27_15_12_9"/>
    <property type="match status" value="1"/>
</dbReference>
<dbReference type="CDD" id="cd00201">
    <property type="entry name" value="WW"/>
    <property type="match status" value="1"/>
</dbReference>
<dbReference type="FunFam" id="1.10.555.10:FF:000084">
    <property type="entry name" value="WW domain-containing protein tag-325"/>
    <property type="match status" value="1"/>
</dbReference>
<dbReference type="FunFam" id="2.20.70.10:FF:000128">
    <property type="entry name" value="WW domain-containing protein tag-325"/>
    <property type="match status" value="1"/>
</dbReference>
<dbReference type="FunFam" id="2.30.29.30:FF:000787">
    <property type="entry name" value="WW domain-containing protein tag-325"/>
    <property type="match status" value="1"/>
</dbReference>
<dbReference type="Gene3D" id="2.20.70.10">
    <property type="match status" value="1"/>
</dbReference>
<dbReference type="Gene3D" id="2.30.29.30">
    <property type="entry name" value="Pleckstrin-homology domain (PH domain)/Phosphotyrosine-binding domain (PTB)"/>
    <property type="match status" value="1"/>
</dbReference>
<dbReference type="Gene3D" id="1.10.555.10">
    <property type="entry name" value="Rho GTPase activation protein"/>
    <property type="match status" value="1"/>
</dbReference>
<dbReference type="InterPro" id="IPR011993">
    <property type="entry name" value="PH-like_dom_sf"/>
</dbReference>
<dbReference type="InterPro" id="IPR001849">
    <property type="entry name" value="PH_domain"/>
</dbReference>
<dbReference type="InterPro" id="IPR050729">
    <property type="entry name" value="Rho-GAP"/>
</dbReference>
<dbReference type="InterPro" id="IPR008936">
    <property type="entry name" value="Rho_GTPase_activation_prot"/>
</dbReference>
<dbReference type="InterPro" id="IPR000198">
    <property type="entry name" value="RhoGAP_dom"/>
</dbReference>
<dbReference type="InterPro" id="IPR001202">
    <property type="entry name" value="WW_dom"/>
</dbReference>
<dbReference type="InterPro" id="IPR036020">
    <property type="entry name" value="WW_dom_sf"/>
</dbReference>
<dbReference type="PANTHER" id="PTHR23176:SF129">
    <property type="entry name" value="RHO GTPASE ACTIVATING PROTEIN AT 16F, ISOFORM E-RELATED"/>
    <property type="match status" value="1"/>
</dbReference>
<dbReference type="PANTHER" id="PTHR23176">
    <property type="entry name" value="RHO/RAC/CDC GTPASE-ACTIVATING PROTEIN"/>
    <property type="match status" value="1"/>
</dbReference>
<dbReference type="Pfam" id="PF00169">
    <property type="entry name" value="PH"/>
    <property type="match status" value="1"/>
</dbReference>
<dbReference type="Pfam" id="PF00620">
    <property type="entry name" value="RhoGAP"/>
    <property type="match status" value="1"/>
</dbReference>
<dbReference type="Pfam" id="PF00397">
    <property type="entry name" value="WW"/>
    <property type="match status" value="1"/>
</dbReference>
<dbReference type="SMART" id="SM00233">
    <property type="entry name" value="PH"/>
    <property type="match status" value="1"/>
</dbReference>
<dbReference type="SMART" id="SM00324">
    <property type="entry name" value="RhoGAP"/>
    <property type="match status" value="1"/>
</dbReference>
<dbReference type="SMART" id="SM00456">
    <property type="entry name" value="WW"/>
    <property type="match status" value="1"/>
</dbReference>
<dbReference type="SUPFAM" id="SSF48350">
    <property type="entry name" value="GTPase activation domain, GAP"/>
    <property type="match status" value="1"/>
</dbReference>
<dbReference type="SUPFAM" id="SSF50729">
    <property type="entry name" value="PH domain-like"/>
    <property type="match status" value="1"/>
</dbReference>
<dbReference type="SUPFAM" id="SSF51045">
    <property type="entry name" value="WW domain"/>
    <property type="match status" value="1"/>
</dbReference>
<dbReference type="PROSITE" id="PS50003">
    <property type="entry name" value="PH_DOMAIN"/>
    <property type="match status" value="1"/>
</dbReference>
<dbReference type="PROSITE" id="PS50238">
    <property type="entry name" value="RHOGAP"/>
    <property type="match status" value="1"/>
</dbReference>
<dbReference type="PROSITE" id="PS01159">
    <property type="entry name" value="WW_DOMAIN_1"/>
    <property type="match status" value="1"/>
</dbReference>
<dbReference type="PROSITE" id="PS50020">
    <property type="entry name" value="WW_DOMAIN_2"/>
    <property type="match status" value="1"/>
</dbReference>
<accession>P46941</accession>
<evidence type="ECO:0000255" key="1">
    <source>
        <dbReference type="PROSITE-ProRule" id="PRU00145"/>
    </source>
</evidence>
<evidence type="ECO:0000255" key="2">
    <source>
        <dbReference type="PROSITE-ProRule" id="PRU00172"/>
    </source>
</evidence>
<evidence type="ECO:0000255" key="3">
    <source>
        <dbReference type="PROSITE-ProRule" id="PRU00224"/>
    </source>
</evidence>
<evidence type="ECO:0000256" key="4">
    <source>
        <dbReference type="SAM" id="MobiDB-lite"/>
    </source>
</evidence>
<proteinExistence type="predicted"/>
<reference key="1">
    <citation type="journal article" date="1998" name="Science">
        <title>Genome sequence of the nematode C. elegans: a platform for investigating biology.</title>
        <authorList>
            <consortium name="The C. elegans sequencing consortium"/>
        </authorList>
    </citation>
    <scope>NUCLEOTIDE SEQUENCE [LARGE SCALE GENOMIC DNA]</scope>
    <source>
        <strain>Bristol N2</strain>
    </source>
</reference>
<organism>
    <name type="scientific">Caenorhabditis elegans</name>
    <dbReference type="NCBI Taxonomy" id="6239"/>
    <lineage>
        <taxon>Eukaryota</taxon>
        <taxon>Metazoa</taxon>
        <taxon>Ecdysozoa</taxon>
        <taxon>Nematoda</taxon>
        <taxon>Chromadorea</taxon>
        <taxon>Rhabditida</taxon>
        <taxon>Rhabditina</taxon>
        <taxon>Rhabditomorpha</taxon>
        <taxon>Rhabditoidea</taxon>
        <taxon>Rhabditidae</taxon>
        <taxon>Peloderinae</taxon>
        <taxon>Caenorhabditis</taxon>
    </lineage>
</organism>
<keyword id="KW-0343">GTPase activation</keyword>
<keyword id="KW-1185">Reference proteome</keyword>
<protein>
    <recommendedName>
        <fullName>WW domain-containing protein tag-325</fullName>
    </recommendedName>
</protein>
<feature type="chain" id="PRO_0000076097" description="WW domain-containing protein tag-325">
    <location>
        <begin position="1"/>
        <end position="837"/>
    </location>
</feature>
<feature type="domain" description="WW" evidence="3">
    <location>
        <begin position="96"/>
        <end position="129"/>
    </location>
</feature>
<feature type="domain" description="PH" evidence="1">
    <location>
        <begin position="386"/>
        <end position="505"/>
    </location>
</feature>
<feature type="domain" description="Rho-GAP" evidence="2">
    <location>
        <begin position="610"/>
        <end position="827"/>
    </location>
</feature>
<feature type="region of interest" description="Disordered" evidence="4">
    <location>
        <begin position="1"/>
        <end position="66"/>
    </location>
</feature>
<feature type="region of interest" description="Disordered" evidence="4">
    <location>
        <begin position="150"/>
        <end position="181"/>
    </location>
</feature>
<feature type="region of interest" description="Disordered" evidence="4">
    <location>
        <begin position="194"/>
        <end position="257"/>
    </location>
</feature>
<feature type="region of interest" description="Disordered" evidence="4">
    <location>
        <begin position="338"/>
        <end position="403"/>
    </location>
</feature>
<feature type="region of interest" description="Disordered" evidence="4">
    <location>
        <begin position="548"/>
        <end position="574"/>
    </location>
</feature>
<feature type="region of interest" description="Disordered" evidence="4">
    <location>
        <begin position="778"/>
        <end position="800"/>
    </location>
</feature>
<feature type="compositionally biased region" description="Polar residues" evidence="4">
    <location>
        <begin position="1"/>
        <end position="11"/>
    </location>
</feature>
<feature type="compositionally biased region" description="Low complexity" evidence="4">
    <location>
        <begin position="33"/>
        <end position="43"/>
    </location>
</feature>
<feature type="compositionally biased region" description="Polar residues" evidence="4">
    <location>
        <begin position="44"/>
        <end position="61"/>
    </location>
</feature>
<feature type="compositionally biased region" description="Low complexity" evidence="4">
    <location>
        <begin position="150"/>
        <end position="161"/>
    </location>
</feature>
<feature type="compositionally biased region" description="Basic and acidic residues" evidence="4">
    <location>
        <begin position="162"/>
        <end position="181"/>
    </location>
</feature>
<feature type="compositionally biased region" description="Polar residues" evidence="4">
    <location>
        <begin position="247"/>
        <end position="257"/>
    </location>
</feature>
<feature type="compositionally biased region" description="Basic and acidic residues" evidence="4">
    <location>
        <begin position="371"/>
        <end position="403"/>
    </location>
</feature>
<feature type="compositionally biased region" description="Polar residues" evidence="4">
    <location>
        <begin position="556"/>
        <end position="569"/>
    </location>
</feature>
<feature type="compositionally biased region" description="Basic residues" evidence="4">
    <location>
        <begin position="778"/>
        <end position="788"/>
    </location>
</feature>
<feature type="site" description="Arginine finger; crucial for GTP hydrolysis by stabilizing the transition state" evidence="2">
    <location>
        <position position="646"/>
    </location>
</feature>
<gene>
    <name type="primary">tag-325</name>
    <name type="ORF">C38D4.5</name>
</gene>
<sequence>MTTAVQPSDTTGFGGGPAGSRASDLIQFQEIMSESAESSSSSSQTNVSAANTLPRESNGQNYADDPSHVYTNIREIEELNSRPVPPTPRADAQPRRDLLNGWFEYETDVGRTFFFNKETGKSQWIPPRFIRTPAQVQEFLRATRTNLDTTCSFQGSSTSSSEEQKENKMRESLADDDRKSQLIEDEEVFDEVCDDVDEQSSPVIDLQSRPLPIPFSDSFTDDEDEDDVKPIEGSIASDSDFDEEPVPTSSRKASTASGVMMPHPYAHVSSFQSTFPRAKNEDTDKLASYVIPPDANETSKTPTAIRVRRPSPTNLRSVSFQNKCTVLKNVPMPQVLPTTSSSFDHHPQYHSNTPDRPILMEDSADFTPSSRCEERRGSGDGREPVRTIRCGDLERSENDEPAEKVVKPKKREWITNYMYLTTAHLILYKDQKSAEKHGKHYDAPQGVWDLRGASVTWYQDNRDVQKKKQRKYIQLELCNTKKYLLRGPNDTEAVEWYKSLEEVVAKLPSPGSSNQPMIDVTNGVARNPSYIGSTRPLSHALIPISRSMRRRDDPMSQSAIETVSTSVSTDEPRPSKETIIEKLRRFFRTRPTVESLKEKGIYKPEPVFGSTLSAICQHENSLVPKFIRVITEVIESKGLETDGIYRVSGNLSAVQKIRCQADQDNYKALVSEEDIHVLTGALKLFFRELTDPLFPISLHKEYTSAMQMPNATTRFKKFEELLSRLPNENRETLKMLLRHLNRVASHSSQNRMQQHNLAIVFGPTLFHNGDGAVNLATKNKKAGKKAKPSKKEETQATPVQSNSHLAFSMIMQSQIVQYLLESANKFDILKAPVNIGR</sequence>
<name>TG325_CAEEL</name>